<dbReference type="EMBL" id="BT020726">
    <property type="protein sequence ID" value="AAX08743.1"/>
    <property type="status" value="ALT_INIT"/>
    <property type="molecule type" value="mRNA"/>
</dbReference>
<dbReference type="RefSeq" id="NP_001029618.1">
    <property type="nucleotide sequence ID" value="NM_001034446.1"/>
</dbReference>
<dbReference type="RefSeq" id="XP_005225575.1">
    <property type="nucleotide sequence ID" value="XM_005225518.5"/>
</dbReference>
<dbReference type="RefSeq" id="XP_005225576.1">
    <property type="nucleotide sequence ID" value="XM_005225519.4"/>
</dbReference>
<dbReference type="RefSeq" id="XP_005225577.1">
    <property type="nucleotide sequence ID" value="XM_005225520.2"/>
</dbReference>
<dbReference type="RefSeq" id="XP_015316146.1">
    <property type="nucleotide sequence ID" value="XM_015460660.1"/>
</dbReference>
<dbReference type="RefSeq" id="XP_015316147.1">
    <property type="nucleotide sequence ID" value="XM_015460661.1"/>
</dbReference>
<dbReference type="RefSeq" id="XP_024841353.1">
    <property type="nucleotide sequence ID" value="XM_024985585.2"/>
</dbReference>
<dbReference type="FunCoup" id="Q5EA43">
    <property type="interactions" value="437"/>
</dbReference>
<dbReference type="STRING" id="9913.ENSBTAP00000005659"/>
<dbReference type="PaxDb" id="9913-ENSBTAP00000005659"/>
<dbReference type="GeneID" id="513450"/>
<dbReference type="KEGG" id="bta:513450"/>
<dbReference type="CTD" id="118980"/>
<dbReference type="eggNOG" id="KOG3767">
    <property type="taxonomic scope" value="Eukaryota"/>
</dbReference>
<dbReference type="HOGENOM" id="CLU_039425_1_0_1"/>
<dbReference type="InParanoid" id="Q5EA43"/>
<dbReference type="OrthoDB" id="6608471at2759"/>
<dbReference type="TreeFam" id="TF313205"/>
<dbReference type="Proteomes" id="UP000009136">
    <property type="component" value="Unplaced"/>
</dbReference>
<dbReference type="GO" id="GO:0005743">
    <property type="term" value="C:mitochondrial inner membrane"/>
    <property type="evidence" value="ECO:0000318"/>
    <property type="project" value="GO_Central"/>
</dbReference>
<dbReference type="GO" id="GO:0005741">
    <property type="term" value="C:mitochondrial outer membrane"/>
    <property type="evidence" value="ECO:0007669"/>
    <property type="project" value="UniProtKB-SubCell"/>
</dbReference>
<dbReference type="GO" id="GO:0005739">
    <property type="term" value="C:mitochondrion"/>
    <property type="evidence" value="ECO:0000250"/>
    <property type="project" value="UniProtKB"/>
</dbReference>
<dbReference type="GO" id="GO:0015075">
    <property type="term" value="F:monoatomic ion transmembrane transporter activity"/>
    <property type="evidence" value="ECO:0007669"/>
    <property type="project" value="InterPro"/>
</dbReference>
<dbReference type="GO" id="GO:0022857">
    <property type="term" value="F:transmembrane transporter activity"/>
    <property type="evidence" value="ECO:0000318"/>
    <property type="project" value="GO_Central"/>
</dbReference>
<dbReference type="GO" id="GO:1990542">
    <property type="term" value="P:mitochondrial transmembrane transport"/>
    <property type="evidence" value="ECO:0000250"/>
    <property type="project" value="UniProtKB"/>
</dbReference>
<dbReference type="GO" id="GO:0140300">
    <property type="term" value="P:serine import into mitochondrion"/>
    <property type="evidence" value="ECO:0000318"/>
    <property type="project" value="GO_Central"/>
</dbReference>
<dbReference type="InterPro" id="IPR004686">
    <property type="entry name" value="Mtc"/>
</dbReference>
<dbReference type="NCBIfam" id="TIGR00798">
    <property type="entry name" value="mtc"/>
    <property type="match status" value="1"/>
</dbReference>
<dbReference type="PANTHER" id="PTHR11153">
    <property type="entry name" value="SIDEROFLEXIN"/>
    <property type="match status" value="1"/>
</dbReference>
<dbReference type="PANTHER" id="PTHR11153:SF14">
    <property type="entry name" value="SIDEROFLEXIN-2"/>
    <property type="match status" value="1"/>
</dbReference>
<dbReference type="Pfam" id="PF03820">
    <property type="entry name" value="SFXNs"/>
    <property type="match status" value="1"/>
</dbReference>
<evidence type="ECO:0000250" key="1">
    <source>
        <dbReference type="UniProtKB" id="Q96NB2"/>
    </source>
</evidence>
<evidence type="ECO:0000255" key="2"/>
<evidence type="ECO:0000305" key="3"/>
<gene>
    <name evidence="1" type="primary">SFXN2</name>
</gene>
<sequence>MEADLSDFNIDAPRWDQCTFLGRVKHFFNITDPRTVLVPERELDWAKVMVEQSRMGTVPPGTQVEQLFYAKKLYDSAFHPDTGHKMNVIGRMSFQVPGGMIITGFMLQFYRTMPAVIFWQWVNQSFNALVNYTNRNAASPTSVRQMAVSYITATTTAVATAVGMNMLTKRAPPLVGRWVPFAAVAAANCVNIPMMRQQELIQGICVKDRNHNEIGHSRRAAAIGITQVVISRITMAAPGMILLPVLMERLEKLRFVQRVRVLHAPLQVLLSGCFLIFMVPVACGLFPQQCELPVSYLEPELQDTIKAKYREPVPHVYFNKGL</sequence>
<comment type="function">
    <text evidence="1">Mitochondrial amino-acid transporter that mediates transport of serine into mitochondria (By similarity). Involved in mitochondrial iron homeostasis by regulating heme biosynthesis (By similarity).</text>
</comment>
<comment type="catalytic activity">
    <reaction evidence="1">
        <text>L-serine(in) = L-serine(out)</text>
        <dbReference type="Rhea" id="RHEA:35031"/>
        <dbReference type="ChEBI" id="CHEBI:33384"/>
    </reaction>
</comment>
<comment type="subcellular location">
    <subcellularLocation>
        <location evidence="1">Mitochondrion inner membrane</location>
        <topology evidence="2">Multi-pass membrane protein</topology>
    </subcellularLocation>
    <subcellularLocation>
        <location evidence="1">Mitochondrion outer membrane</location>
        <topology evidence="2">Multi-pass membrane protein</topology>
    </subcellularLocation>
</comment>
<comment type="similarity">
    <text evidence="3">Belongs to the sideroflexin family.</text>
</comment>
<comment type="sequence caution" evidence="3">
    <conflict type="erroneous initiation">
        <sequence resource="EMBL-CDS" id="AAX08743"/>
    </conflict>
</comment>
<proteinExistence type="evidence at transcript level"/>
<feature type="chain" id="PRO_0000247975" description="Sideroflexin-2">
    <location>
        <begin position="1"/>
        <end position="322"/>
    </location>
</feature>
<feature type="transmembrane region" description="Helical" evidence="2">
    <location>
        <begin position="100"/>
        <end position="122"/>
    </location>
</feature>
<feature type="transmembrane region" description="Helical" evidence="2">
    <location>
        <begin position="142"/>
        <end position="164"/>
    </location>
</feature>
<feature type="transmembrane region" description="Helical" evidence="2">
    <location>
        <begin position="174"/>
        <end position="192"/>
    </location>
</feature>
<feature type="transmembrane region" description="Helical" evidence="2">
    <location>
        <begin position="228"/>
        <end position="250"/>
    </location>
</feature>
<feature type="transmembrane region" description="Helical" evidence="2">
    <location>
        <begin position="265"/>
        <end position="287"/>
    </location>
</feature>
<feature type="modified residue" description="N-acetylmethionine" evidence="1">
    <location>
        <position position="1"/>
    </location>
</feature>
<organism>
    <name type="scientific">Bos taurus</name>
    <name type="common">Bovine</name>
    <dbReference type="NCBI Taxonomy" id="9913"/>
    <lineage>
        <taxon>Eukaryota</taxon>
        <taxon>Metazoa</taxon>
        <taxon>Chordata</taxon>
        <taxon>Craniata</taxon>
        <taxon>Vertebrata</taxon>
        <taxon>Euteleostomi</taxon>
        <taxon>Mammalia</taxon>
        <taxon>Eutheria</taxon>
        <taxon>Laurasiatheria</taxon>
        <taxon>Artiodactyla</taxon>
        <taxon>Ruminantia</taxon>
        <taxon>Pecora</taxon>
        <taxon>Bovidae</taxon>
        <taxon>Bovinae</taxon>
        <taxon>Bos</taxon>
    </lineage>
</organism>
<name>SFXN2_BOVIN</name>
<reference key="1">
    <citation type="journal article" date="2005" name="BMC Genomics">
        <title>Characterization of 954 bovine full-CDS cDNA sequences.</title>
        <authorList>
            <person name="Harhay G.P."/>
            <person name="Sonstegard T.S."/>
            <person name="Keele J.W."/>
            <person name="Heaton M.P."/>
            <person name="Clawson M.L."/>
            <person name="Snelling W.M."/>
            <person name="Wiedmann R.T."/>
            <person name="Van Tassell C.P."/>
            <person name="Smith T.P.L."/>
        </authorList>
    </citation>
    <scope>NUCLEOTIDE SEQUENCE [LARGE SCALE MRNA]</scope>
</reference>
<protein>
    <recommendedName>
        <fullName evidence="1">Sideroflexin-2</fullName>
    </recommendedName>
</protein>
<accession>Q5EA43</accession>
<keyword id="KW-0007">Acetylation</keyword>
<keyword id="KW-0029">Amino-acid transport</keyword>
<keyword id="KW-0472">Membrane</keyword>
<keyword id="KW-0496">Mitochondrion</keyword>
<keyword id="KW-0999">Mitochondrion inner membrane</keyword>
<keyword id="KW-1000">Mitochondrion outer membrane</keyword>
<keyword id="KW-1185">Reference proteome</keyword>
<keyword id="KW-0812">Transmembrane</keyword>
<keyword id="KW-1133">Transmembrane helix</keyword>
<keyword id="KW-0813">Transport</keyword>